<accession>Q99NF3</accession>
<accession>D3Z3U1</accession>
<accession>F7CSA6</accession>
<accession>Q3TTB5</accession>
<accession>Q8BT53</accession>
<feature type="chain" id="PRO_0000089490" description="Centrosomal protein of 41 kDa">
    <location>
        <begin position="1"/>
        <end position="373"/>
    </location>
</feature>
<feature type="domain" description="Rhodanese" evidence="2">
    <location>
        <begin position="169"/>
        <end position="266"/>
    </location>
</feature>
<feature type="region of interest" description="Disordered" evidence="3">
    <location>
        <begin position="91"/>
        <end position="137"/>
    </location>
</feature>
<feature type="region of interest" description="Disordered" evidence="3">
    <location>
        <begin position="317"/>
        <end position="373"/>
    </location>
</feature>
<feature type="compositionally biased region" description="Polar residues" evidence="3">
    <location>
        <begin position="116"/>
        <end position="137"/>
    </location>
</feature>
<feature type="compositionally biased region" description="Polar residues" evidence="3">
    <location>
        <begin position="325"/>
        <end position="334"/>
    </location>
</feature>
<feature type="compositionally biased region" description="Polar residues" evidence="3">
    <location>
        <begin position="347"/>
        <end position="366"/>
    </location>
</feature>
<feature type="modified residue" description="Phosphoserine" evidence="7">
    <location>
        <position position="96"/>
    </location>
</feature>
<feature type="modified residue" description="Phosphoserine" evidence="7">
    <location>
        <position position="99"/>
    </location>
</feature>
<feature type="modified residue" description="Phosphothreonine" evidence="7">
    <location>
        <position position="109"/>
    </location>
</feature>
<feature type="modified residue" description="Phosphoserine" evidence="7">
    <location>
        <position position="114"/>
    </location>
</feature>
<feature type="modified residue" description="Phosphoserine" evidence="7">
    <location>
        <position position="121"/>
    </location>
</feature>
<feature type="modified residue" description="Omega-N-methylarginine" evidence="8">
    <location>
        <position position="343"/>
    </location>
</feature>
<feature type="splice variant" id="VSP_012249" description="In isoform 2." evidence="5">
    <original>GNSMTKYIEKL</original>
    <variation>ACASQLRVFGI</variation>
    <location>
        <begin position="33"/>
        <end position="43"/>
    </location>
</feature>
<feature type="splice variant" id="VSP_012250" description="In isoform 2." evidence="5">
    <location>
        <begin position="44"/>
        <end position="373"/>
    </location>
</feature>
<dbReference type="EMBL" id="AJ278891">
    <property type="protein sequence ID" value="CAC33579.1"/>
    <property type="molecule type" value="mRNA"/>
</dbReference>
<dbReference type="EMBL" id="AK019270">
    <property type="protein sequence ID" value="BAC25586.1"/>
    <property type="molecule type" value="mRNA"/>
</dbReference>
<dbReference type="EMBL" id="AK132495">
    <property type="protein sequence ID" value="BAE21202.1"/>
    <property type="molecule type" value="mRNA"/>
</dbReference>
<dbReference type="EMBL" id="AK161461">
    <property type="protein sequence ID" value="BAE36410.1"/>
    <property type="molecule type" value="mRNA"/>
</dbReference>
<dbReference type="EMBL" id="AK170213">
    <property type="protein sequence ID" value="BAE41640.1"/>
    <property type="molecule type" value="mRNA"/>
</dbReference>
<dbReference type="EMBL" id="AC155656">
    <property type="status" value="NOT_ANNOTATED_CDS"/>
    <property type="molecule type" value="Genomic_DNA"/>
</dbReference>
<dbReference type="EMBL" id="CH466533">
    <property type="protein sequence ID" value="EDL13733.1"/>
    <property type="molecule type" value="Genomic_DNA"/>
</dbReference>
<dbReference type="EMBL" id="BC031892">
    <property type="protein sequence ID" value="AAH31892.1"/>
    <property type="molecule type" value="mRNA"/>
</dbReference>
<dbReference type="CCDS" id="CCDS19978.1">
    <molecule id="Q99NF3-1"/>
</dbReference>
<dbReference type="RefSeq" id="NP_114387.1">
    <molecule id="Q99NF3-1"/>
    <property type="nucleotide sequence ID" value="NM_031998.3"/>
</dbReference>
<dbReference type="SMR" id="Q99NF3"/>
<dbReference type="BioGRID" id="219983">
    <property type="interactions" value="1"/>
</dbReference>
<dbReference type="FunCoup" id="Q99NF3">
    <property type="interactions" value="860"/>
</dbReference>
<dbReference type="STRING" id="10090.ENSMUSP00000031810"/>
<dbReference type="iPTMnet" id="Q99NF3"/>
<dbReference type="PhosphoSitePlus" id="Q99NF3"/>
<dbReference type="SwissPalm" id="Q99NF3"/>
<dbReference type="jPOST" id="Q99NF3"/>
<dbReference type="PaxDb" id="10090-ENSMUSP00000031810"/>
<dbReference type="ProteomicsDB" id="279999">
    <molecule id="Q99NF3-1"/>
</dbReference>
<dbReference type="ProteomicsDB" id="280000">
    <molecule id="Q99NF3-2"/>
</dbReference>
<dbReference type="Pumba" id="Q99NF3"/>
<dbReference type="Antibodypedia" id="32076">
    <property type="antibodies" value="80 antibodies from 23 providers"/>
</dbReference>
<dbReference type="Ensembl" id="ENSMUST00000031810.15">
    <molecule id="Q99NF3-1"/>
    <property type="protein sequence ID" value="ENSMUSP00000031810.9"/>
    <property type="gene ID" value="ENSMUSG00000029790.17"/>
</dbReference>
<dbReference type="Ensembl" id="ENSMUST00000115130.3">
    <molecule id="Q99NF3-2"/>
    <property type="protein sequence ID" value="ENSMUSP00000110783.3"/>
    <property type="gene ID" value="ENSMUSG00000029790.17"/>
</dbReference>
<dbReference type="GeneID" id="83922"/>
<dbReference type="KEGG" id="mmu:83922"/>
<dbReference type="UCSC" id="uc009bfr.2">
    <molecule id="Q99NF3-1"/>
    <property type="organism name" value="mouse"/>
</dbReference>
<dbReference type="AGR" id="MGI:1891414"/>
<dbReference type="CTD" id="95681"/>
<dbReference type="MGI" id="MGI:1891414">
    <property type="gene designation" value="Cep41"/>
</dbReference>
<dbReference type="VEuPathDB" id="HostDB:ENSMUSG00000029790"/>
<dbReference type="eggNOG" id="ENOG502QR8A">
    <property type="taxonomic scope" value="Eukaryota"/>
</dbReference>
<dbReference type="GeneTree" id="ENSGT00390000002222"/>
<dbReference type="HOGENOM" id="CLU_3241979_0_0_1"/>
<dbReference type="InParanoid" id="Q99NF3"/>
<dbReference type="OMA" id="TMCQRGF"/>
<dbReference type="OrthoDB" id="70250at2759"/>
<dbReference type="PhylomeDB" id="Q99NF3"/>
<dbReference type="TreeFam" id="TF324682"/>
<dbReference type="Reactome" id="R-MMU-2565942">
    <property type="pathway name" value="Regulation of PLK1 Activity at G2/M Transition"/>
</dbReference>
<dbReference type="Reactome" id="R-MMU-380259">
    <property type="pathway name" value="Loss of Nlp from mitotic centrosomes"/>
</dbReference>
<dbReference type="Reactome" id="R-MMU-380270">
    <property type="pathway name" value="Recruitment of mitotic centrosome proteins and complexes"/>
</dbReference>
<dbReference type="Reactome" id="R-MMU-380284">
    <property type="pathway name" value="Loss of proteins required for interphase microtubule organization from the centrosome"/>
</dbReference>
<dbReference type="Reactome" id="R-MMU-380320">
    <property type="pathway name" value="Recruitment of NuMA to mitotic centrosomes"/>
</dbReference>
<dbReference type="Reactome" id="R-MMU-5620912">
    <property type="pathway name" value="Anchoring of the basal body to the plasma membrane"/>
</dbReference>
<dbReference type="Reactome" id="R-MMU-8854518">
    <property type="pathway name" value="AURKA Activation by TPX2"/>
</dbReference>
<dbReference type="BioGRID-ORCS" id="83922">
    <property type="hits" value="0 hits in 60 CRISPR screens"/>
</dbReference>
<dbReference type="ChiTaRS" id="Cep41">
    <property type="organism name" value="mouse"/>
</dbReference>
<dbReference type="PRO" id="PR:Q99NF3"/>
<dbReference type="Proteomes" id="UP000000589">
    <property type="component" value="Chromosome 6"/>
</dbReference>
<dbReference type="RNAct" id="Q99NF3">
    <property type="molecule type" value="protein"/>
</dbReference>
<dbReference type="Bgee" id="ENSMUSG00000029790">
    <property type="expression patterns" value="Expressed in vestibular epithelium and 193 other cell types or tissues"/>
</dbReference>
<dbReference type="ExpressionAtlas" id="Q99NF3">
    <property type="expression patterns" value="baseline and differential"/>
</dbReference>
<dbReference type="GO" id="GO:0005814">
    <property type="term" value="C:centriole"/>
    <property type="evidence" value="ECO:0000314"/>
    <property type="project" value="UniProtKB"/>
</dbReference>
<dbReference type="GO" id="GO:0005813">
    <property type="term" value="C:centrosome"/>
    <property type="evidence" value="ECO:0007669"/>
    <property type="project" value="UniProtKB-SubCell"/>
</dbReference>
<dbReference type="GO" id="GO:0036064">
    <property type="term" value="C:ciliary basal body"/>
    <property type="evidence" value="ECO:0000314"/>
    <property type="project" value="UniProtKB"/>
</dbReference>
<dbReference type="GO" id="GO:0005929">
    <property type="term" value="C:cilium"/>
    <property type="evidence" value="ECO:0000314"/>
    <property type="project" value="UniProtKB"/>
</dbReference>
<dbReference type="GO" id="GO:0005737">
    <property type="term" value="C:cytoplasm"/>
    <property type="evidence" value="ECO:0007669"/>
    <property type="project" value="UniProtKB-KW"/>
</dbReference>
<dbReference type="GO" id="GO:0060271">
    <property type="term" value="P:cilium assembly"/>
    <property type="evidence" value="ECO:0000315"/>
    <property type="project" value="UniProtKB"/>
</dbReference>
<dbReference type="GO" id="GO:0018095">
    <property type="term" value="P:protein polyglutamylation"/>
    <property type="evidence" value="ECO:0000250"/>
    <property type="project" value="UniProtKB"/>
</dbReference>
<dbReference type="GO" id="GO:0015031">
    <property type="term" value="P:protein transport"/>
    <property type="evidence" value="ECO:0007669"/>
    <property type="project" value="UniProtKB-KW"/>
</dbReference>
<dbReference type="CDD" id="cd00158">
    <property type="entry name" value="RHOD"/>
    <property type="match status" value="1"/>
</dbReference>
<dbReference type="FunFam" id="3.40.250.10:FF:000012">
    <property type="entry name" value="Centrosomal protein of 41 kDa"/>
    <property type="match status" value="1"/>
</dbReference>
<dbReference type="Gene3D" id="3.40.250.10">
    <property type="entry name" value="Rhodanese-like domain"/>
    <property type="match status" value="1"/>
</dbReference>
<dbReference type="InterPro" id="IPR051889">
    <property type="entry name" value="CEP41"/>
</dbReference>
<dbReference type="InterPro" id="IPR001763">
    <property type="entry name" value="Rhodanese-like_dom"/>
</dbReference>
<dbReference type="InterPro" id="IPR036873">
    <property type="entry name" value="Rhodanese-like_dom_sf"/>
</dbReference>
<dbReference type="PANTHER" id="PTHR44390">
    <property type="entry name" value="CENTROSOMAL PROTEIN OF 41 KDA"/>
    <property type="match status" value="1"/>
</dbReference>
<dbReference type="PANTHER" id="PTHR44390:SF1">
    <property type="entry name" value="CENTROSOMAL PROTEIN OF 41 KDA"/>
    <property type="match status" value="1"/>
</dbReference>
<dbReference type="Pfam" id="PF00581">
    <property type="entry name" value="Rhodanese"/>
    <property type="match status" value="1"/>
</dbReference>
<dbReference type="SMART" id="SM00450">
    <property type="entry name" value="RHOD"/>
    <property type="match status" value="1"/>
</dbReference>
<dbReference type="SUPFAM" id="SSF52821">
    <property type="entry name" value="Rhodanese/Cell cycle control phosphatase"/>
    <property type="match status" value="1"/>
</dbReference>
<dbReference type="PROSITE" id="PS50206">
    <property type="entry name" value="RHODANESE_3"/>
    <property type="match status" value="1"/>
</dbReference>
<name>CEP41_MOUSE</name>
<keyword id="KW-0025">Alternative splicing</keyword>
<keyword id="KW-0966">Cell projection</keyword>
<keyword id="KW-1186">Ciliopathy</keyword>
<keyword id="KW-0969">Cilium</keyword>
<keyword id="KW-0970">Cilium biogenesis/degradation</keyword>
<keyword id="KW-0963">Cytoplasm</keyword>
<keyword id="KW-0206">Cytoskeleton</keyword>
<keyword id="KW-0488">Methylation</keyword>
<keyword id="KW-0597">Phosphoprotein</keyword>
<keyword id="KW-0653">Protein transport</keyword>
<keyword id="KW-1185">Reference proteome</keyword>
<keyword id="KW-0813">Transport</keyword>
<organism>
    <name type="scientific">Mus musculus</name>
    <name type="common">Mouse</name>
    <dbReference type="NCBI Taxonomy" id="10090"/>
    <lineage>
        <taxon>Eukaryota</taxon>
        <taxon>Metazoa</taxon>
        <taxon>Chordata</taxon>
        <taxon>Craniata</taxon>
        <taxon>Vertebrata</taxon>
        <taxon>Euteleostomi</taxon>
        <taxon>Mammalia</taxon>
        <taxon>Eutheria</taxon>
        <taxon>Euarchontoglires</taxon>
        <taxon>Glires</taxon>
        <taxon>Rodentia</taxon>
        <taxon>Myomorpha</taxon>
        <taxon>Muroidea</taxon>
        <taxon>Muridae</taxon>
        <taxon>Murinae</taxon>
        <taxon>Mus</taxon>
        <taxon>Mus</taxon>
    </lineage>
</organism>
<comment type="function">
    <text evidence="4">Required during ciliogenesis for tubulin glutamylation in cilium. Probably acts by participating in the transport of TTLL6, a tubulin polyglutamylase, between the basal body and the cilium.</text>
</comment>
<comment type="subunit">
    <text evidence="1">Found in a complex with TTLL6.</text>
</comment>
<comment type="subcellular location">
    <subcellularLocation>
        <location evidence="1">Cytoplasm</location>
        <location evidence="1">Cytoskeleton</location>
        <location evidence="1">Microtubule organizing center</location>
        <location evidence="1">Centrosome</location>
    </subcellularLocation>
    <subcellularLocation>
        <location evidence="4">Cell projection</location>
        <location evidence="4">Cilium</location>
    </subcellularLocation>
    <subcellularLocation>
        <location evidence="4">Cytoplasm</location>
        <location evidence="4">Cytoskeleton</location>
        <location evidence="4">Cilium basal body</location>
    </subcellularLocation>
    <text>Localizes mainly to the cilium basal body and in primary cilia.</text>
</comment>
<comment type="alternative products">
    <event type="alternative splicing"/>
    <isoform>
        <id>Q99NF3-1</id>
        <name>1</name>
        <sequence type="displayed"/>
    </isoform>
    <isoform>
        <id>Q99NF3-2</id>
        <name>2</name>
        <sequence type="described" ref="VSP_012249 VSP_012250"/>
    </isoform>
</comment>
<comment type="disruption phenotype">
    <text evidence="4">At 10-13 dpc, embryos show a range of phenotypes, such as malformed hindbrain, exencephaly, brain hemorrhage, dilated pericardial sac and lethality. For an unclear reason, some homozygous mutants develop normally, suggesting presence of extragenic phenotypic modifiers.</text>
</comment>
<comment type="similarity">
    <text evidence="6">Belongs to the CEP41 family.</text>
</comment>
<gene>
    <name type="primary">Cep41</name>
    <name type="synonym">Tsga14</name>
</gene>
<reference key="1">
    <citation type="submission" date="2000-08" db="EMBL/GenBank/DDBJ databases">
        <title>Identification of a testis-specific gene (TSGA14) proximal to the MEST/COPG2 imprinting cluster on chromosome 7.</title>
        <authorList>
            <person name="Brunner B."/>
            <person name="Kalamajka R."/>
            <person name="Ropers H.-H."/>
            <person name="Fundele R."/>
            <person name="Kalscheuer V.M."/>
        </authorList>
    </citation>
    <scope>NUCLEOTIDE SEQUENCE [MRNA] (ISOFORM 1)</scope>
    <source>
        <strain>C57BL/6J</strain>
    </source>
</reference>
<reference key="2">
    <citation type="journal article" date="2005" name="Science">
        <title>The transcriptional landscape of the mammalian genome.</title>
        <authorList>
            <person name="Carninci P."/>
            <person name="Kasukawa T."/>
            <person name="Katayama S."/>
            <person name="Gough J."/>
            <person name="Frith M.C."/>
            <person name="Maeda N."/>
            <person name="Oyama R."/>
            <person name="Ravasi T."/>
            <person name="Lenhard B."/>
            <person name="Wells C."/>
            <person name="Kodzius R."/>
            <person name="Shimokawa K."/>
            <person name="Bajic V.B."/>
            <person name="Brenner S.E."/>
            <person name="Batalov S."/>
            <person name="Forrest A.R."/>
            <person name="Zavolan M."/>
            <person name="Davis M.J."/>
            <person name="Wilming L.G."/>
            <person name="Aidinis V."/>
            <person name="Allen J.E."/>
            <person name="Ambesi-Impiombato A."/>
            <person name="Apweiler R."/>
            <person name="Aturaliya R.N."/>
            <person name="Bailey T.L."/>
            <person name="Bansal M."/>
            <person name="Baxter L."/>
            <person name="Beisel K.W."/>
            <person name="Bersano T."/>
            <person name="Bono H."/>
            <person name="Chalk A.M."/>
            <person name="Chiu K.P."/>
            <person name="Choudhary V."/>
            <person name="Christoffels A."/>
            <person name="Clutterbuck D.R."/>
            <person name="Crowe M.L."/>
            <person name="Dalla E."/>
            <person name="Dalrymple B.P."/>
            <person name="de Bono B."/>
            <person name="Della Gatta G."/>
            <person name="di Bernardo D."/>
            <person name="Down T."/>
            <person name="Engstrom P."/>
            <person name="Fagiolini M."/>
            <person name="Faulkner G."/>
            <person name="Fletcher C.F."/>
            <person name="Fukushima T."/>
            <person name="Furuno M."/>
            <person name="Futaki S."/>
            <person name="Gariboldi M."/>
            <person name="Georgii-Hemming P."/>
            <person name="Gingeras T.R."/>
            <person name="Gojobori T."/>
            <person name="Green R.E."/>
            <person name="Gustincich S."/>
            <person name="Harbers M."/>
            <person name="Hayashi Y."/>
            <person name="Hensch T.K."/>
            <person name="Hirokawa N."/>
            <person name="Hill D."/>
            <person name="Huminiecki L."/>
            <person name="Iacono M."/>
            <person name="Ikeo K."/>
            <person name="Iwama A."/>
            <person name="Ishikawa T."/>
            <person name="Jakt M."/>
            <person name="Kanapin A."/>
            <person name="Katoh M."/>
            <person name="Kawasawa Y."/>
            <person name="Kelso J."/>
            <person name="Kitamura H."/>
            <person name="Kitano H."/>
            <person name="Kollias G."/>
            <person name="Krishnan S.P."/>
            <person name="Kruger A."/>
            <person name="Kummerfeld S.K."/>
            <person name="Kurochkin I.V."/>
            <person name="Lareau L.F."/>
            <person name="Lazarevic D."/>
            <person name="Lipovich L."/>
            <person name="Liu J."/>
            <person name="Liuni S."/>
            <person name="McWilliam S."/>
            <person name="Madan Babu M."/>
            <person name="Madera M."/>
            <person name="Marchionni L."/>
            <person name="Matsuda H."/>
            <person name="Matsuzawa S."/>
            <person name="Miki H."/>
            <person name="Mignone F."/>
            <person name="Miyake S."/>
            <person name="Morris K."/>
            <person name="Mottagui-Tabar S."/>
            <person name="Mulder N."/>
            <person name="Nakano N."/>
            <person name="Nakauchi H."/>
            <person name="Ng P."/>
            <person name="Nilsson R."/>
            <person name="Nishiguchi S."/>
            <person name="Nishikawa S."/>
            <person name="Nori F."/>
            <person name="Ohara O."/>
            <person name="Okazaki Y."/>
            <person name="Orlando V."/>
            <person name="Pang K.C."/>
            <person name="Pavan W.J."/>
            <person name="Pavesi G."/>
            <person name="Pesole G."/>
            <person name="Petrovsky N."/>
            <person name="Piazza S."/>
            <person name="Reed J."/>
            <person name="Reid J.F."/>
            <person name="Ring B.Z."/>
            <person name="Ringwald M."/>
            <person name="Rost B."/>
            <person name="Ruan Y."/>
            <person name="Salzberg S.L."/>
            <person name="Sandelin A."/>
            <person name="Schneider C."/>
            <person name="Schoenbach C."/>
            <person name="Sekiguchi K."/>
            <person name="Semple C.A."/>
            <person name="Seno S."/>
            <person name="Sessa L."/>
            <person name="Sheng Y."/>
            <person name="Shibata Y."/>
            <person name="Shimada H."/>
            <person name="Shimada K."/>
            <person name="Silva D."/>
            <person name="Sinclair B."/>
            <person name="Sperling S."/>
            <person name="Stupka E."/>
            <person name="Sugiura K."/>
            <person name="Sultana R."/>
            <person name="Takenaka Y."/>
            <person name="Taki K."/>
            <person name="Tammoja K."/>
            <person name="Tan S.L."/>
            <person name="Tang S."/>
            <person name="Taylor M.S."/>
            <person name="Tegner J."/>
            <person name="Teichmann S.A."/>
            <person name="Ueda H.R."/>
            <person name="van Nimwegen E."/>
            <person name="Verardo R."/>
            <person name="Wei C.L."/>
            <person name="Yagi K."/>
            <person name="Yamanishi H."/>
            <person name="Zabarovsky E."/>
            <person name="Zhu S."/>
            <person name="Zimmer A."/>
            <person name="Hide W."/>
            <person name="Bult C."/>
            <person name="Grimmond S.M."/>
            <person name="Teasdale R.D."/>
            <person name="Liu E.T."/>
            <person name="Brusic V."/>
            <person name="Quackenbush J."/>
            <person name="Wahlestedt C."/>
            <person name="Mattick J.S."/>
            <person name="Hume D.A."/>
            <person name="Kai C."/>
            <person name="Sasaki D."/>
            <person name="Tomaru Y."/>
            <person name="Fukuda S."/>
            <person name="Kanamori-Katayama M."/>
            <person name="Suzuki M."/>
            <person name="Aoki J."/>
            <person name="Arakawa T."/>
            <person name="Iida J."/>
            <person name="Imamura K."/>
            <person name="Itoh M."/>
            <person name="Kato T."/>
            <person name="Kawaji H."/>
            <person name="Kawagashira N."/>
            <person name="Kawashima T."/>
            <person name="Kojima M."/>
            <person name="Kondo S."/>
            <person name="Konno H."/>
            <person name="Nakano K."/>
            <person name="Ninomiya N."/>
            <person name="Nishio T."/>
            <person name="Okada M."/>
            <person name="Plessy C."/>
            <person name="Shibata K."/>
            <person name="Shiraki T."/>
            <person name="Suzuki S."/>
            <person name="Tagami M."/>
            <person name="Waki K."/>
            <person name="Watahiki A."/>
            <person name="Okamura-Oho Y."/>
            <person name="Suzuki H."/>
            <person name="Kawai J."/>
            <person name="Hayashizaki Y."/>
        </authorList>
    </citation>
    <scope>NUCLEOTIDE SEQUENCE [LARGE SCALE MRNA] (ISOFORMS 1 AND 2)</scope>
    <source>
        <strain>C57BL/6J</strain>
        <strain>NOD</strain>
        <tissue>Embryo</tissue>
        <tissue>Skin</tissue>
        <tissue>Testis</tissue>
    </source>
</reference>
<reference key="3">
    <citation type="journal article" date="2009" name="PLoS Biol.">
        <title>Lineage-specific biology revealed by a finished genome assembly of the mouse.</title>
        <authorList>
            <person name="Church D.M."/>
            <person name="Goodstadt L."/>
            <person name="Hillier L.W."/>
            <person name="Zody M.C."/>
            <person name="Goldstein S."/>
            <person name="She X."/>
            <person name="Bult C.J."/>
            <person name="Agarwala R."/>
            <person name="Cherry J.L."/>
            <person name="DiCuccio M."/>
            <person name="Hlavina W."/>
            <person name="Kapustin Y."/>
            <person name="Meric P."/>
            <person name="Maglott D."/>
            <person name="Birtle Z."/>
            <person name="Marques A.C."/>
            <person name="Graves T."/>
            <person name="Zhou S."/>
            <person name="Teague B."/>
            <person name="Potamousis K."/>
            <person name="Churas C."/>
            <person name="Place M."/>
            <person name="Herschleb J."/>
            <person name="Runnheim R."/>
            <person name="Forrest D."/>
            <person name="Amos-Landgraf J."/>
            <person name="Schwartz D.C."/>
            <person name="Cheng Z."/>
            <person name="Lindblad-Toh K."/>
            <person name="Eichler E.E."/>
            <person name="Ponting C.P."/>
        </authorList>
    </citation>
    <scope>NUCLEOTIDE SEQUENCE [LARGE SCALE GENOMIC DNA]</scope>
    <source>
        <strain>C57BL/6J</strain>
    </source>
</reference>
<reference key="4">
    <citation type="submission" date="2005-09" db="EMBL/GenBank/DDBJ databases">
        <authorList>
            <person name="Mural R.J."/>
            <person name="Adams M.D."/>
            <person name="Myers E.W."/>
            <person name="Smith H.O."/>
            <person name="Venter J.C."/>
        </authorList>
    </citation>
    <scope>NUCLEOTIDE SEQUENCE [LARGE SCALE GENOMIC DNA]</scope>
</reference>
<reference key="5">
    <citation type="journal article" date="2004" name="Genome Res.">
        <title>The status, quality, and expansion of the NIH full-length cDNA project: the Mammalian Gene Collection (MGC).</title>
        <authorList>
            <consortium name="The MGC Project Team"/>
        </authorList>
    </citation>
    <scope>NUCLEOTIDE SEQUENCE [LARGE SCALE MRNA] (ISOFORM 1)</scope>
    <source>
        <tissue>Eye</tissue>
    </source>
</reference>
<reference key="6">
    <citation type="journal article" date="2004" name="Mol. Cell. Proteomics">
        <title>Phosphoproteomic analysis of the developing mouse brain.</title>
        <authorList>
            <person name="Ballif B.A."/>
            <person name="Villen J."/>
            <person name="Beausoleil S.A."/>
            <person name="Schwartz D."/>
            <person name="Gygi S.P."/>
        </authorList>
    </citation>
    <scope>IDENTIFICATION BY MASS SPECTROMETRY [LARGE SCALE ANALYSIS]</scope>
    <source>
        <tissue>Embryonic brain</tissue>
    </source>
</reference>
<reference key="7">
    <citation type="journal article" date="2010" name="Cell">
        <title>A tissue-specific atlas of mouse protein phosphorylation and expression.</title>
        <authorList>
            <person name="Huttlin E.L."/>
            <person name="Jedrychowski M.P."/>
            <person name="Elias J.E."/>
            <person name="Goswami T."/>
            <person name="Rad R."/>
            <person name="Beausoleil S.A."/>
            <person name="Villen J."/>
            <person name="Haas W."/>
            <person name="Sowa M.E."/>
            <person name="Gygi S.P."/>
        </authorList>
    </citation>
    <scope>PHOSPHORYLATION [LARGE SCALE ANALYSIS] AT SER-96; SER-99; THR-109; SER-114 AND SER-121</scope>
    <scope>IDENTIFICATION BY MASS SPECTROMETRY [LARGE SCALE ANALYSIS]</scope>
    <source>
        <tissue>Brain</tissue>
        <tissue>Kidney</tissue>
        <tissue>Lung</tissue>
        <tissue>Spleen</tissue>
        <tissue>Testis</tissue>
    </source>
</reference>
<reference key="8">
    <citation type="journal article" date="2012" name="Nat. Genet.">
        <title>CEP41 is mutated in Joubert syndrome and is required for tubulin glutamylation at the cilium.</title>
        <authorList>
            <person name="Lee J.E."/>
            <person name="Silhavy J.L."/>
            <person name="Zaki M.S."/>
            <person name="Schroth J."/>
            <person name="Bielas S.L."/>
            <person name="Marsh S.E."/>
            <person name="Olvera J."/>
            <person name="Brancati F."/>
            <person name="Iannicelli M."/>
            <person name="Ikegami K."/>
            <person name="Schlossman A.M."/>
            <person name="Merriman B."/>
            <person name="Attie-Bitach T."/>
            <person name="Logan C.V."/>
            <person name="Glass I.A."/>
            <person name="Cluckey A."/>
            <person name="Louie C.M."/>
            <person name="Lee J.H."/>
            <person name="Raynes H.R."/>
            <person name="Rapin I."/>
            <person name="Castroviejo I.P."/>
            <person name="Setou M."/>
            <person name="Barbot C."/>
            <person name="Boltshauser E."/>
            <person name="Nelson S.F."/>
            <person name="Hildebrandt F."/>
            <person name="Johnson C.A."/>
            <person name="Doherty D.A."/>
            <person name="Valente E.M."/>
            <person name="Gleeson J.G."/>
        </authorList>
    </citation>
    <scope>FUNCTION</scope>
    <scope>SUBCELLULAR LOCATION</scope>
    <scope>DISRUPTION PHENOTYPE</scope>
</reference>
<reference key="9">
    <citation type="journal article" date="2014" name="Mol. Cell. Proteomics">
        <title>Immunoaffinity enrichment and mass spectrometry analysis of protein methylation.</title>
        <authorList>
            <person name="Guo A."/>
            <person name="Gu H."/>
            <person name="Zhou J."/>
            <person name="Mulhern D."/>
            <person name="Wang Y."/>
            <person name="Lee K.A."/>
            <person name="Yang V."/>
            <person name="Aguiar M."/>
            <person name="Kornhauser J."/>
            <person name="Jia X."/>
            <person name="Ren J."/>
            <person name="Beausoleil S.A."/>
            <person name="Silva J.C."/>
            <person name="Vemulapalli V."/>
            <person name="Bedford M.T."/>
            <person name="Comb M.J."/>
        </authorList>
    </citation>
    <scope>METHYLATION [LARGE SCALE ANALYSIS] AT ARG-343</scope>
    <scope>IDENTIFICATION BY MASS SPECTROMETRY [LARGE SCALE ANALYSIS]</scope>
    <source>
        <tissue>Brain</tissue>
    </source>
</reference>
<evidence type="ECO:0000250" key="1"/>
<evidence type="ECO:0000255" key="2">
    <source>
        <dbReference type="PROSITE-ProRule" id="PRU00173"/>
    </source>
</evidence>
<evidence type="ECO:0000256" key="3">
    <source>
        <dbReference type="SAM" id="MobiDB-lite"/>
    </source>
</evidence>
<evidence type="ECO:0000269" key="4">
    <source>
    </source>
</evidence>
<evidence type="ECO:0000303" key="5">
    <source>
    </source>
</evidence>
<evidence type="ECO:0000305" key="6"/>
<evidence type="ECO:0007744" key="7">
    <source>
    </source>
</evidence>
<evidence type="ECO:0007744" key="8">
    <source>
    </source>
</evidence>
<sequence>MSARRHIGNPEYLTRRIPQNPRYQHVKSRLDTGNSMTKYIEKLEEIKKNYRYKKDELFKRLKVTTFAQLVIQVASLSDQTLEVTAEEIQRLEDNDSATSEADAEIAAKTNGKGSPEEQSPSPVQFINSTGAGDSSRSTLQSVISGVGELDVDKGLVKKEEPNGKDKPYPDCPFLLLDVRDRDSYQQCHIVGAYSYPIATLSRTMNPYSNDILEYKNAHGKIIILYDEDERLASQAATTMCERGFENLFMLSGGLKVLAQKFPEGLVTGSLPASCQQALPFGSVRKRRGPKMPALPAENKWRFTPEDLKKIECYLEEDQGPADNPSRLNQNNSAGKDSKVAACRGGQNLPTSCPASHSSPRTLTSGHLQGKPWK</sequence>
<proteinExistence type="evidence at protein level"/>
<protein>
    <recommendedName>
        <fullName>Centrosomal protein of 41 kDa</fullName>
        <shortName>Cep41</shortName>
    </recommendedName>
    <alternativeName>
        <fullName>Testis-specific gene A14 protein</fullName>
    </alternativeName>
</protein>